<proteinExistence type="inferred from homology"/>
<evidence type="ECO:0000250" key="1">
    <source>
        <dbReference type="UniProtKB" id="Q07384"/>
    </source>
</evidence>
<evidence type="ECO:0000305" key="2"/>
<organismHost>
    <name type="scientific">Ornithodoros</name>
    <name type="common">relapsing fever ticks</name>
    <dbReference type="NCBI Taxonomy" id="6937"/>
</organismHost>
<organismHost>
    <name type="scientific">Phacochoerus aethiopicus</name>
    <name type="common">Warthog</name>
    <dbReference type="NCBI Taxonomy" id="85517"/>
</organismHost>
<organismHost>
    <name type="scientific">Phacochoerus africanus</name>
    <name type="common">Warthog</name>
    <dbReference type="NCBI Taxonomy" id="41426"/>
</organismHost>
<organismHost>
    <name type="scientific">Potamochoerus larvatus</name>
    <name type="common">Bushpig</name>
    <dbReference type="NCBI Taxonomy" id="273792"/>
</organismHost>
<organismHost>
    <name type="scientific">Sus scrofa</name>
    <name type="common">Pig</name>
    <dbReference type="NCBI Taxonomy" id="9823"/>
</organismHost>
<organism>
    <name type="scientific">African swine fever virus (isolate Tick/South Africa/Pretoriuskop Pr4/1996)</name>
    <name type="common">ASFV</name>
    <dbReference type="NCBI Taxonomy" id="561443"/>
    <lineage>
        <taxon>Viruses</taxon>
        <taxon>Varidnaviria</taxon>
        <taxon>Bamfordvirae</taxon>
        <taxon>Nucleocytoviricota</taxon>
        <taxon>Pokkesviricetes</taxon>
        <taxon>Asfuvirales</taxon>
        <taxon>Asfarviridae</taxon>
        <taxon>Asfivirus</taxon>
        <taxon>African swine fever virus</taxon>
    </lineage>
</organism>
<reference key="1">
    <citation type="submission" date="2003-03" db="EMBL/GenBank/DDBJ databases">
        <title>African swine fever virus genomes.</title>
        <authorList>
            <person name="Kutish G.F."/>
            <person name="Rock D.L."/>
        </authorList>
    </citation>
    <scope>NUCLEOTIDE SEQUENCE [LARGE SCALE GENOMIC DNA]</scope>
</reference>
<name>VF421_ASFP4</name>
<feature type="chain" id="PRO_0000373683" description="Uncharacterized protein K421R">
    <location>
        <begin position="1"/>
        <end position="422"/>
    </location>
</feature>
<accession>P0CAG8</accession>
<dbReference type="EMBL" id="AY261363">
    <property type="status" value="NOT_ANNOTATED_CDS"/>
    <property type="molecule type" value="Genomic_DNA"/>
</dbReference>
<dbReference type="Proteomes" id="UP000000859">
    <property type="component" value="Segment"/>
</dbReference>
<dbReference type="GO" id="GO:0044423">
    <property type="term" value="C:virion component"/>
    <property type="evidence" value="ECO:0007669"/>
    <property type="project" value="UniProtKB-KW"/>
</dbReference>
<keyword id="KW-0426">Late protein</keyword>
<keyword id="KW-0946">Virion</keyword>
<sequence>MYTHVDVVGIAEASAALYVQKDRDRYSDVLTTIENFIYQHKCIITGESAHLLFLKKNIYLYEFYSNNVAEHSKALATLLYKLDPEYLTRYTVLITKIPNHWYVINVDQREFVRLYAIPAVKQHLPIPILPFYCTSALTQQELFCLGPELQLIQIYSKLCNPNFVEEWPTLLDYEKSMRTLFLEQFPQRLEMTGGKKEEEEKHESIIKKIILEMVSTRQRIVVGGYIQKNLYNHVLKNRNRLQLITSLNIYEEKDIIQQFCDSNGLKIKIRINNPLLPTNPELRRLTIYFNNTNDDDQSYLIVDMYNTGSYELVPTNQINTLDGSFLIGTPFVQARFLLVEIWVLMLIAQQTKKDTKKIIQFFINQYEMLMNSPWPSMEALFPSSSKRYLGNYVDPNALIKWAQLKLKRIPPFYPGKPDEESC</sequence>
<protein>
    <recommendedName>
        <fullName>Uncharacterized protein K421R</fullName>
        <shortName>pK421R</shortName>
    </recommendedName>
</protein>
<comment type="subcellular location">
    <subcellularLocation>
        <location evidence="1">Virion</location>
    </subcellularLocation>
</comment>
<comment type="induction">
    <text evidence="2">Expressed in the late phase of the viral replicative cycle.</text>
</comment>
<comment type="similarity">
    <text evidence="2">Belongs to the asfivirus K421R family.</text>
</comment>
<gene>
    <name type="ordered locus">Pret-064</name>
</gene>